<reference key="1">
    <citation type="journal article" date="2001" name="Nature">
        <title>Genome sequence of Yersinia pestis, the causative agent of plague.</title>
        <authorList>
            <person name="Parkhill J."/>
            <person name="Wren B.W."/>
            <person name="Thomson N.R."/>
            <person name="Titball R.W."/>
            <person name="Holden M.T.G."/>
            <person name="Prentice M.B."/>
            <person name="Sebaihia M."/>
            <person name="James K.D."/>
            <person name="Churcher C.M."/>
            <person name="Mungall K.L."/>
            <person name="Baker S."/>
            <person name="Basham D."/>
            <person name="Bentley S.D."/>
            <person name="Brooks K."/>
            <person name="Cerdeno-Tarraga A.-M."/>
            <person name="Chillingworth T."/>
            <person name="Cronin A."/>
            <person name="Davies R.M."/>
            <person name="Davis P."/>
            <person name="Dougan G."/>
            <person name="Feltwell T."/>
            <person name="Hamlin N."/>
            <person name="Holroyd S."/>
            <person name="Jagels K."/>
            <person name="Karlyshev A.V."/>
            <person name="Leather S."/>
            <person name="Moule S."/>
            <person name="Oyston P.C.F."/>
            <person name="Quail M.A."/>
            <person name="Rutherford K.M."/>
            <person name="Simmonds M."/>
            <person name="Skelton J."/>
            <person name="Stevens K."/>
            <person name="Whitehead S."/>
            <person name="Barrell B.G."/>
        </authorList>
    </citation>
    <scope>NUCLEOTIDE SEQUENCE [LARGE SCALE GENOMIC DNA]</scope>
    <source>
        <strain>CO-92 / Biovar Orientalis</strain>
    </source>
</reference>
<reference key="2">
    <citation type="journal article" date="2002" name="J. Bacteriol.">
        <title>Genome sequence of Yersinia pestis KIM.</title>
        <authorList>
            <person name="Deng W."/>
            <person name="Burland V."/>
            <person name="Plunkett G. III"/>
            <person name="Boutin A."/>
            <person name="Mayhew G.F."/>
            <person name="Liss P."/>
            <person name="Perna N.T."/>
            <person name="Rose D.J."/>
            <person name="Mau B."/>
            <person name="Zhou S."/>
            <person name="Schwartz D.C."/>
            <person name="Fetherston J.D."/>
            <person name="Lindler L.E."/>
            <person name="Brubaker R.R."/>
            <person name="Plano G.V."/>
            <person name="Straley S.C."/>
            <person name="McDonough K.A."/>
            <person name="Nilles M.L."/>
            <person name="Matson J.S."/>
            <person name="Blattner F.R."/>
            <person name="Perry R.D."/>
        </authorList>
    </citation>
    <scope>NUCLEOTIDE SEQUENCE [LARGE SCALE GENOMIC DNA]</scope>
    <source>
        <strain>KIM10+ / Biovar Mediaevalis</strain>
    </source>
</reference>
<reference key="3">
    <citation type="journal article" date="2004" name="DNA Res.">
        <title>Complete genome sequence of Yersinia pestis strain 91001, an isolate avirulent to humans.</title>
        <authorList>
            <person name="Song Y."/>
            <person name="Tong Z."/>
            <person name="Wang J."/>
            <person name="Wang L."/>
            <person name="Guo Z."/>
            <person name="Han Y."/>
            <person name="Zhang J."/>
            <person name="Pei D."/>
            <person name="Zhou D."/>
            <person name="Qin H."/>
            <person name="Pang X."/>
            <person name="Han Y."/>
            <person name="Zhai J."/>
            <person name="Li M."/>
            <person name="Cui B."/>
            <person name="Qi Z."/>
            <person name="Jin L."/>
            <person name="Dai R."/>
            <person name="Chen F."/>
            <person name="Li S."/>
            <person name="Ye C."/>
            <person name="Du Z."/>
            <person name="Lin W."/>
            <person name="Wang J."/>
            <person name="Yu J."/>
            <person name="Yang H."/>
            <person name="Wang J."/>
            <person name="Huang P."/>
            <person name="Yang R."/>
        </authorList>
    </citation>
    <scope>NUCLEOTIDE SEQUENCE [LARGE SCALE GENOMIC DNA]</scope>
    <source>
        <strain>91001 / Biovar Mediaevalis</strain>
    </source>
</reference>
<feature type="chain" id="PRO_0000091444" description="Elongation factor Tu-B">
    <location>
        <begin position="1"/>
        <end position="394"/>
    </location>
</feature>
<feature type="domain" description="tr-type G">
    <location>
        <begin position="10"/>
        <end position="204"/>
    </location>
</feature>
<feature type="region of interest" description="G1" evidence="1">
    <location>
        <begin position="19"/>
        <end position="26"/>
    </location>
</feature>
<feature type="region of interest" description="G2" evidence="1">
    <location>
        <begin position="60"/>
        <end position="64"/>
    </location>
</feature>
<feature type="region of interest" description="G3" evidence="1">
    <location>
        <begin position="81"/>
        <end position="84"/>
    </location>
</feature>
<feature type="region of interest" description="G4" evidence="1">
    <location>
        <begin position="136"/>
        <end position="139"/>
    </location>
</feature>
<feature type="region of interest" description="G5" evidence="1">
    <location>
        <begin position="174"/>
        <end position="176"/>
    </location>
</feature>
<feature type="binding site" evidence="2">
    <location>
        <begin position="19"/>
        <end position="26"/>
    </location>
    <ligand>
        <name>GTP</name>
        <dbReference type="ChEBI" id="CHEBI:37565"/>
    </ligand>
</feature>
<feature type="binding site" evidence="2">
    <location>
        <position position="26"/>
    </location>
    <ligand>
        <name>Mg(2+)</name>
        <dbReference type="ChEBI" id="CHEBI:18420"/>
    </ligand>
</feature>
<feature type="binding site" evidence="2">
    <location>
        <begin position="81"/>
        <end position="85"/>
    </location>
    <ligand>
        <name>GTP</name>
        <dbReference type="ChEBI" id="CHEBI:37565"/>
    </ligand>
</feature>
<feature type="binding site" evidence="2">
    <location>
        <begin position="136"/>
        <end position="139"/>
    </location>
    <ligand>
        <name>GTP</name>
        <dbReference type="ChEBI" id="CHEBI:37565"/>
    </ligand>
</feature>
<sequence>MSKEKFERTKPHVNVGTIGHVDHGKTTLTAAITTVLAKTYGGSARAFDQIDNAPEEKARGITINTSHVEYDTPARHYAHVDCPGHADYVKNMITGAAQMDGAILVVAATDGPMPQTREHILLGRQVGVPYIIVFLNKCDMVDDEELLELVEMEVRELLSQYDFPGDDTPVIRGSALKALEGDAEWEAKIIELAEALDSYIPQPERAIDRPFLLPIEDVFSISGRGTVVTGRVERGIVKVGEEVEIVGIIDTIKTTCTGVEMFRKLLDEGRAGENVGVLLRGTKRDDVQRGQVLAKPGSIKPHTKFESEVYILSKDEGGRHTPFFKGYRPQFYFRTTDVTGTIELPEGVEMVMPGDNVNMVVNLIAPIAMDDGLRFAIREGGRTVGAGVVAKVIE</sequence>
<comment type="function">
    <text evidence="2">GTP hydrolase that promotes the GTP-dependent binding of aminoacyl-tRNA to the A-site of ribosomes during protein biosynthesis.</text>
</comment>
<comment type="catalytic activity">
    <reaction evidence="2">
        <text>GTP + H2O = GDP + phosphate + H(+)</text>
        <dbReference type="Rhea" id="RHEA:19669"/>
        <dbReference type="ChEBI" id="CHEBI:15377"/>
        <dbReference type="ChEBI" id="CHEBI:15378"/>
        <dbReference type="ChEBI" id="CHEBI:37565"/>
        <dbReference type="ChEBI" id="CHEBI:43474"/>
        <dbReference type="ChEBI" id="CHEBI:58189"/>
        <dbReference type="EC" id="3.6.5.3"/>
    </reaction>
    <physiologicalReaction direction="left-to-right" evidence="2">
        <dbReference type="Rhea" id="RHEA:19670"/>
    </physiologicalReaction>
</comment>
<comment type="subunit">
    <text evidence="2">Monomer.</text>
</comment>
<comment type="subcellular location">
    <subcellularLocation>
        <location evidence="2">Cytoplasm</location>
    </subcellularLocation>
</comment>
<comment type="similarity">
    <text evidence="2">Belongs to the TRAFAC class translation factor GTPase superfamily. Classic translation factor GTPase family. EF-Tu/EF-1A subfamily.</text>
</comment>
<dbReference type="EC" id="3.6.5.3" evidence="2"/>
<dbReference type="EMBL" id="AL590842">
    <property type="protein sequence ID" value="CAL22341.1"/>
    <property type="molecule type" value="Genomic_DNA"/>
</dbReference>
<dbReference type="EMBL" id="AE009952">
    <property type="protein sequence ID" value="AAM84066.1"/>
    <property type="molecule type" value="Genomic_DNA"/>
</dbReference>
<dbReference type="EMBL" id="AE017042">
    <property type="protein sequence ID" value="AAS63287.1"/>
    <property type="molecule type" value="Genomic_DNA"/>
</dbReference>
<dbReference type="PIR" id="AB0457">
    <property type="entry name" value="AB0457"/>
</dbReference>
<dbReference type="RefSeq" id="YP_002348634.1">
    <property type="nucleotide sequence ID" value="NC_003143.1"/>
</dbReference>
<dbReference type="SMR" id="Q8ZAN8"/>
<dbReference type="STRING" id="214092.YPO3754"/>
<dbReference type="PaxDb" id="214092-YPO3754"/>
<dbReference type="DNASU" id="1145424"/>
<dbReference type="EnsemblBacteria" id="AAS63287">
    <property type="protein sequence ID" value="AAS63287"/>
    <property type="gene ID" value="YP_3117"/>
</dbReference>
<dbReference type="KEGG" id="ype:YPO3754"/>
<dbReference type="KEGG" id="ypk:y0477"/>
<dbReference type="KEGG" id="ypm:YP_3117"/>
<dbReference type="PATRIC" id="fig|214092.21.peg.4272"/>
<dbReference type="eggNOG" id="COG0050">
    <property type="taxonomic scope" value="Bacteria"/>
</dbReference>
<dbReference type="HOGENOM" id="CLU_007265_0_0_6"/>
<dbReference type="OMA" id="NYIQMMY"/>
<dbReference type="OrthoDB" id="9803139at2"/>
<dbReference type="Proteomes" id="UP000000815">
    <property type="component" value="Chromosome"/>
</dbReference>
<dbReference type="Proteomes" id="UP000001019">
    <property type="component" value="Chromosome"/>
</dbReference>
<dbReference type="Proteomes" id="UP000002490">
    <property type="component" value="Chromosome"/>
</dbReference>
<dbReference type="GO" id="GO:0005737">
    <property type="term" value="C:cytoplasm"/>
    <property type="evidence" value="ECO:0007669"/>
    <property type="project" value="UniProtKB-SubCell"/>
</dbReference>
<dbReference type="GO" id="GO:0005525">
    <property type="term" value="F:GTP binding"/>
    <property type="evidence" value="ECO:0007669"/>
    <property type="project" value="UniProtKB-UniRule"/>
</dbReference>
<dbReference type="GO" id="GO:0003924">
    <property type="term" value="F:GTPase activity"/>
    <property type="evidence" value="ECO:0007669"/>
    <property type="project" value="InterPro"/>
</dbReference>
<dbReference type="GO" id="GO:0097216">
    <property type="term" value="F:guanosine tetraphosphate binding"/>
    <property type="evidence" value="ECO:0007669"/>
    <property type="project" value="UniProtKB-ARBA"/>
</dbReference>
<dbReference type="GO" id="GO:0003746">
    <property type="term" value="F:translation elongation factor activity"/>
    <property type="evidence" value="ECO:0000318"/>
    <property type="project" value="GO_Central"/>
</dbReference>
<dbReference type="GO" id="GO:0006414">
    <property type="term" value="P:translational elongation"/>
    <property type="evidence" value="ECO:0000318"/>
    <property type="project" value="GO_Central"/>
</dbReference>
<dbReference type="CDD" id="cd01884">
    <property type="entry name" value="EF_Tu"/>
    <property type="match status" value="1"/>
</dbReference>
<dbReference type="CDD" id="cd03697">
    <property type="entry name" value="EFTU_II"/>
    <property type="match status" value="1"/>
</dbReference>
<dbReference type="CDD" id="cd03707">
    <property type="entry name" value="EFTU_III"/>
    <property type="match status" value="1"/>
</dbReference>
<dbReference type="FunFam" id="2.40.30.10:FF:000001">
    <property type="entry name" value="Elongation factor Tu"/>
    <property type="match status" value="1"/>
</dbReference>
<dbReference type="FunFam" id="3.40.50.300:FF:000003">
    <property type="entry name" value="Elongation factor Tu"/>
    <property type="match status" value="1"/>
</dbReference>
<dbReference type="Gene3D" id="3.40.50.300">
    <property type="entry name" value="P-loop containing nucleotide triphosphate hydrolases"/>
    <property type="match status" value="1"/>
</dbReference>
<dbReference type="Gene3D" id="2.40.30.10">
    <property type="entry name" value="Translation factors"/>
    <property type="match status" value="2"/>
</dbReference>
<dbReference type="HAMAP" id="MF_00118_B">
    <property type="entry name" value="EF_Tu_B"/>
    <property type="match status" value="1"/>
</dbReference>
<dbReference type="InterPro" id="IPR041709">
    <property type="entry name" value="EF-Tu_GTP-bd"/>
</dbReference>
<dbReference type="InterPro" id="IPR050055">
    <property type="entry name" value="EF-Tu_GTPase"/>
</dbReference>
<dbReference type="InterPro" id="IPR004161">
    <property type="entry name" value="EFTu-like_2"/>
</dbReference>
<dbReference type="InterPro" id="IPR033720">
    <property type="entry name" value="EFTU_2"/>
</dbReference>
<dbReference type="InterPro" id="IPR031157">
    <property type="entry name" value="G_TR_CS"/>
</dbReference>
<dbReference type="InterPro" id="IPR027417">
    <property type="entry name" value="P-loop_NTPase"/>
</dbReference>
<dbReference type="InterPro" id="IPR005225">
    <property type="entry name" value="Small_GTP-bd"/>
</dbReference>
<dbReference type="InterPro" id="IPR000795">
    <property type="entry name" value="T_Tr_GTP-bd_dom"/>
</dbReference>
<dbReference type="InterPro" id="IPR009000">
    <property type="entry name" value="Transl_B-barrel_sf"/>
</dbReference>
<dbReference type="InterPro" id="IPR009001">
    <property type="entry name" value="Transl_elong_EF1A/Init_IF2_C"/>
</dbReference>
<dbReference type="InterPro" id="IPR004541">
    <property type="entry name" value="Transl_elong_EFTu/EF1A_bac/org"/>
</dbReference>
<dbReference type="InterPro" id="IPR004160">
    <property type="entry name" value="Transl_elong_EFTu/EF1A_C"/>
</dbReference>
<dbReference type="NCBIfam" id="TIGR00485">
    <property type="entry name" value="EF-Tu"/>
    <property type="match status" value="1"/>
</dbReference>
<dbReference type="NCBIfam" id="NF000766">
    <property type="entry name" value="PRK00049.1"/>
    <property type="match status" value="1"/>
</dbReference>
<dbReference type="NCBIfam" id="NF009372">
    <property type="entry name" value="PRK12735.1"/>
    <property type="match status" value="1"/>
</dbReference>
<dbReference type="NCBIfam" id="NF009373">
    <property type="entry name" value="PRK12736.1"/>
    <property type="match status" value="1"/>
</dbReference>
<dbReference type="NCBIfam" id="TIGR00231">
    <property type="entry name" value="small_GTP"/>
    <property type="match status" value="1"/>
</dbReference>
<dbReference type="PANTHER" id="PTHR43721:SF22">
    <property type="entry name" value="ELONGATION FACTOR TU, MITOCHONDRIAL"/>
    <property type="match status" value="1"/>
</dbReference>
<dbReference type="PANTHER" id="PTHR43721">
    <property type="entry name" value="ELONGATION FACTOR TU-RELATED"/>
    <property type="match status" value="1"/>
</dbReference>
<dbReference type="Pfam" id="PF00009">
    <property type="entry name" value="GTP_EFTU"/>
    <property type="match status" value="1"/>
</dbReference>
<dbReference type="Pfam" id="PF03144">
    <property type="entry name" value="GTP_EFTU_D2"/>
    <property type="match status" value="1"/>
</dbReference>
<dbReference type="Pfam" id="PF03143">
    <property type="entry name" value="GTP_EFTU_D3"/>
    <property type="match status" value="1"/>
</dbReference>
<dbReference type="PRINTS" id="PR00315">
    <property type="entry name" value="ELONGATNFCT"/>
</dbReference>
<dbReference type="SUPFAM" id="SSF50465">
    <property type="entry name" value="EF-Tu/eEF-1alpha/eIF2-gamma C-terminal domain"/>
    <property type="match status" value="1"/>
</dbReference>
<dbReference type="SUPFAM" id="SSF52540">
    <property type="entry name" value="P-loop containing nucleoside triphosphate hydrolases"/>
    <property type="match status" value="1"/>
</dbReference>
<dbReference type="SUPFAM" id="SSF50447">
    <property type="entry name" value="Translation proteins"/>
    <property type="match status" value="1"/>
</dbReference>
<dbReference type="PROSITE" id="PS00301">
    <property type="entry name" value="G_TR_1"/>
    <property type="match status" value="1"/>
</dbReference>
<dbReference type="PROSITE" id="PS51722">
    <property type="entry name" value="G_TR_2"/>
    <property type="match status" value="1"/>
</dbReference>
<proteinExistence type="inferred from homology"/>
<protein>
    <recommendedName>
        <fullName evidence="2">Elongation factor Tu-B</fullName>
        <shortName evidence="2">EF-Tu-B</shortName>
        <ecNumber evidence="2">3.6.5.3</ecNumber>
    </recommendedName>
</protein>
<evidence type="ECO:0000250" key="1"/>
<evidence type="ECO:0000255" key="2">
    <source>
        <dbReference type="HAMAP-Rule" id="MF_00118"/>
    </source>
</evidence>
<gene>
    <name evidence="2" type="primary">tufB</name>
    <name type="ordered locus">YPO3754</name>
    <name type="ordered locus">y0477</name>
    <name type="ordered locus">YP_3117</name>
</gene>
<keyword id="KW-0963">Cytoplasm</keyword>
<keyword id="KW-0251">Elongation factor</keyword>
<keyword id="KW-0342">GTP-binding</keyword>
<keyword id="KW-0378">Hydrolase</keyword>
<keyword id="KW-0460">Magnesium</keyword>
<keyword id="KW-0479">Metal-binding</keyword>
<keyword id="KW-0547">Nucleotide-binding</keyword>
<keyword id="KW-0648">Protein biosynthesis</keyword>
<keyword id="KW-1185">Reference proteome</keyword>
<accession>Q8ZAN8</accession>
<accession>Q0WAQ4</accession>
<name>EFTU2_YERPE</name>
<organism>
    <name type="scientific">Yersinia pestis</name>
    <dbReference type="NCBI Taxonomy" id="632"/>
    <lineage>
        <taxon>Bacteria</taxon>
        <taxon>Pseudomonadati</taxon>
        <taxon>Pseudomonadota</taxon>
        <taxon>Gammaproteobacteria</taxon>
        <taxon>Enterobacterales</taxon>
        <taxon>Yersiniaceae</taxon>
        <taxon>Yersinia</taxon>
    </lineage>
</organism>